<feature type="chain" id="PRO_0000431729" description="Toxin BmKK12">
    <location>
        <begin position="1"/>
        <end position="31"/>
    </location>
</feature>
<feature type="modified residue" description="Pyrrolidone carboxylic acid" evidence="2">
    <location>
        <position position="1"/>
    </location>
</feature>
<feature type="modified residue" description="Proline amide" evidence="2">
    <location>
        <position position="31"/>
    </location>
</feature>
<feature type="disulfide bond" evidence="1">
    <location>
        <begin position="4"/>
        <end position="20"/>
    </location>
</feature>
<feature type="disulfide bond" evidence="1">
    <location>
        <begin position="10"/>
        <end position="25"/>
    </location>
</feature>
<feature type="disulfide bond" evidence="1">
    <location>
        <begin position="14"/>
        <end position="27"/>
    </location>
</feature>
<reference key="1">
    <citation type="journal article" date="2012" name="Proteomics">
        <title>Short-chain peptides identification of scorpion Buthus martensi Karsch venom by employing high orthogonal 2D-HPLC system and tandem mass spectrometry.</title>
        <authorList>
            <person name="Xu J."/>
            <person name="Zhang X."/>
            <person name="Guo Z."/>
            <person name="Yan J."/>
            <person name="Yu L."/>
            <person name="Li X."/>
            <person name="Xue X."/>
            <person name="Liang X."/>
        </authorList>
    </citation>
    <scope>PROTEIN SEQUENCE</scope>
    <scope>SUBCELLULAR LOCATION</scope>
    <scope>MASS SPECTROMETRY</scope>
    <scope>PYROGLUTAMATE FORMATION AT GLN-1</scope>
    <scope>AMIDATION AT PRO-31</scope>
    <source>
        <tissue>Venom</tissue>
    </source>
</reference>
<dbReference type="SMR" id="P0DMR8"/>
<dbReference type="GO" id="GO:0005576">
    <property type="term" value="C:extracellular region"/>
    <property type="evidence" value="ECO:0007669"/>
    <property type="project" value="UniProtKB-SubCell"/>
</dbReference>
<dbReference type="GO" id="GO:0015459">
    <property type="term" value="F:potassium channel regulator activity"/>
    <property type="evidence" value="ECO:0007669"/>
    <property type="project" value="UniProtKB-KW"/>
</dbReference>
<dbReference type="GO" id="GO:0090729">
    <property type="term" value="F:toxin activity"/>
    <property type="evidence" value="ECO:0007669"/>
    <property type="project" value="UniProtKB-KW"/>
</dbReference>
<name>KA17C_OLIMR</name>
<keyword id="KW-0027">Amidation</keyword>
<keyword id="KW-0903">Direct protein sequencing</keyword>
<keyword id="KW-1015">Disulfide bond</keyword>
<keyword id="KW-0872">Ion channel impairing toxin</keyword>
<keyword id="KW-0632">Potassium channel impairing toxin</keyword>
<keyword id="KW-0873">Pyrrolidone carboxylic acid</keyword>
<keyword id="KW-0964">Secreted</keyword>
<keyword id="KW-0800">Toxin</keyword>
<keyword id="KW-1220">Voltage-gated potassium channel impairing toxin</keyword>
<sequence length="31" mass="3683">QRQCQNVQNCYKYCMSPKKCEYGTCYCEPSP</sequence>
<accession>P0DMR8</accession>
<comment type="function">
    <text evidence="1">Blocker of potassium channels (Kv).</text>
</comment>
<comment type="subcellular location">
    <subcellularLocation>
        <location evidence="2">Secreted</location>
    </subcellularLocation>
</comment>
<comment type="tissue specificity">
    <text evidence="3">Expressed by the venom gland.</text>
</comment>
<comment type="domain">
    <text evidence="1">Has the structural arrangement of an alpha-helix connected to a beta-sheet by disulfide bonds (CSalpha/beta).</text>
</comment>
<comment type="PTM">
    <text evidence="2">The N-terminus is blocked.</text>
</comment>
<comment type="mass spectrometry" mass="3657.23" method="Electrospray" evidence="2">
    <text>Monoisotopic mass.</text>
</comment>
<comment type="similarity">
    <text evidence="3">Belongs to the short scorpion toxin superfamily. Potassium channel inhibitor family. Alpha-KTx 17 subfamily.</text>
</comment>
<evidence type="ECO:0000250" key="1">
    <source>
        <dbReference type="UniProtKB" id="Q95NJ8"/>
    </source>
</evidence>
<evidence type="ECO:0000269" key="2">
    <source>
    </source>
</evidence>
<evidence type="ECO:0000305" key="3"/>
<proteinExistence type="evidence at protein level"/>
<organism>
    <name type="scientific">Olivierus martensii</name>
    <name type="common">Manchurian scorpion</name>
    <name type="synonym">Mesobuthus martensii</name>
    <dbReference type="NCBI Taxonomy" id="34649"/>
    <lineage>
        <taxon>Eukaryota</taxon>
        <taxon>Metazoa</taxon>
        <taxon>Ecdysozoa</taxon>
        <taxon>Arthropoda</taxon>
        <taxon>Chelicerata</taxon>
        <taxon>Arachnida</taxon>
        <taxon>Scorpiones</taxon>
        <taxon>Buthida</taxon>
        <taxon>Buthoidea</taxon>
        <taxon>Buthidae</taxon>
        <taxon>Olivierus</taxon>
    </lineage>
</organism>
<protein>
    <recommendedName>
        <fullName>Toxin BmKK12</fullName>
    </recommendedName>
</protein>